<sequence length="304" mass="36183">MSASYWDSSQRHKWKYTRESLAKEKQKLWLLECQLFPQGLNVTIHDSKANKQVTTNIPVTQRDLHYDRDYNLRIYCYFLIMKLGRRLNIRQCALVTAHVYLSRFLLRASVREVNLYLLITTCIYLACKVEECPQHIRTLVNEARSLWPEFIPPDVTKVTEFEFYLIEELQSYLIVHHPYRSLEQIEKALSSEKYNYKLSDDELQKIWSLINDSYTTDVHLLYSPHVIAISCLFAVSCIIHKPEDSTKRANINMFIAETQVNLEQVMFILQELISLYDHWDKYNELRIRALLHELYLRQQTPAIQ</sequence>
<feature type="chain" id="PRO_0000314277" description="RNA polymerase II holoenzyme cyclin-like subunit">
    <location>
        <begin position="1"/>
        <end position="304"/>
    </location>
</feature>
<feature type="domain" description="Cyclin N-terminal">
    <location>
        <begin position="43"/>
        <end position="174"/>
    </location>
</feature>
<keyword id="KW-0010">Activator</keyword>
<keyword id="KW-0195">Cyclin</keyword>
<keyword id="KW-0539">Nucleus</keyword>
<keyword id="KW-1185">Reference proteome</keyword>
<keyword id="KW-0678">Repressor</keyword>
<keyword id="KW-0804">Transcription</keyword>
<keyword id="KW-0805">Transcription regulation</keyword>
<accession>Q6CP20</accession>
<protein>
    <recommendedName>
        <fullName>RNA polymerase II holoenzyme cyclin-like subunit</fullName>
    </recommendedName>
</protein>
<evidence type="ECO:0000250" key="1"/>
<evidence type="ECO:0000305" key="2"/>
<gene>
    <name type="primary">SSN8</name>
    <name type="ordered locus">KLLA0E08151g</name>
</gene>
<reference key="1">
    <citation type="journal article" date="2004" name="Nature">
        <title>Genome evolution in yeasts.</title>
        <authorList>
            <person name="Dujon B."/>
            <person name="Sherman D."/>
            <person name="Fischer G."/>
            <person name="Durrens P."/>
            <person name="Casaregola S."/>
            <person name="Lafontaine I."/>
            <person name="de Montigny J."/>
            <person name="Marck C."/>
            <person name="Neuveglise C."/>
            <person name="Talla E."/>
            <person name="Goffard N."/>
            <person name="Frangeul L."/>
            <person name="Aigle M."/>
            <person name="Anthouard V."/>
            <person name="Babour A."/>
            <person name="Barbe V."/>
            <person name="Barnay S."/>
            <person name="Blanchin S."/>
            <person name="Beckerich J.-M."/>
            <person name="Beyne E."/>
            <person name="Bleykasten C."/>
            <person name="Boisrame A."/>
            <person name="Boyer J."/>
            <person name="Cattolico L."/>
            <person name="Confanioleri F."/>
            <person name="de Daruvar A."/>
            <person name="Despons L."/>
            <person name="Fabre E."/>
            <person name="Fairhead C."/>
            <person name="Ferry-Dumazet H."/>
            <person name="Groppi A."/>
            <person name="Hantraye F."/>
            <person name="Hennequin C."/>
            <person name="Jauniaux N."/>
            <person name="Joyet P."/>
            <person name="Kachouri R."/>
            <person name="Kerrest A."/>
            <person name="Koszul R."/>
            <person name="Lemaire M."/>
            <person name="Lesur I."/>
            <person name="Ma L."/>
            <person name="Muller H."/>
            <person name="Nicaud J.-M."/>
            <person name="Nikolski M."/>
            <person name="Oztas S."/>
            <person name="Ozier-Kalogeropoulos O."/>
            <person name="Pellenz S."/>
            <person name="Potier S."/>
            <person name="Richard G.-F."/>
            <person name="Straub M.-L."/>
            <person name="Suleau A."/>
            <person name="Swennen D."/>
            <person name="Tekaia F."/>
            <person name="Wesolowski-Louvel M."/>
            <person name="Westhof E."/>
            <person name="Wirth B."/>
            <person name="Zeniou-Meyer M."/>
            <person name="Zivanovic Y."/>
            <person name="Bolotin-Fukuhara M."/>
            <person name="Thierry A."/>
            <person name="Bouchier C."/>
            <person name="Caudron B."/>
            <person name="Scarpelli C."/>
            <person name="Gaillardin C."/>
            <person name="Weissenbach J."/>
            <person name="Wincker P."/>
            <person name="Souciet J.-L."/>
        </authorList>
    </citation>
    <scope>NUCLEOTIDE SEQUENCE [LARGE SCALE GENOMIC DNA]</scope>
    <source>
        <strain>ATCC 8585 / CBS 2359 / DSM 70799 / NBRC 1267 / NRRL Y-1140 / WM37</strain>
    </source>
</reference>
<organism>
    <name type="scientific">Kluyveromyces lactis (strain ATCC 8585 / CBS 2359 / DSM 70799 / NBRC 1267 / NRRL Y-1140 / WM37)</name>
    <name type="common">Yeast</name>
    <name type="synonym">Candida sphaerica</name>
    <dbReference type="NCBI Taxonomy" id="284590"/>
    <lineage>
        <taxon>Eukaryota</taxon>
        <taxon>Fungi</taxon>
        <taxon>Dikarya</taxon>
        <taxon>Ascomycota</taxon>
        <taxon>Saccharomycotina</taxon>
        <taxon>Saccharomycetes</taxon>
        <taxon>Saccharomycetales</taxon>
        <taxon>Saccharomycetaceae</taxon>
        <taxon>Kluyveromyces</taxon>
    </lineage>
</organism>
<proteinExistence type="inferred from homology"/>
<dbReference type="EMBL" id="CR382125">
    <property type="protein sequence ID" value="CAG99406.1"/>
    <property type="molecule type" value="Genomic_DNA"/>
</dbReference>
<dbReference type="RefSeq" id="XP_454319.1">
    <property type="nucleotide sequence ID" value="XM_454319.1"/>
</dbReference>
<dbReference type="SMR" id="Q6CP20"/>
<dbReference type="FunCoup" id="Q6CP20">
    <property type="interactions" value="1034"/>
</dbReference>
<dbReference type="STRING" id="284590.Q6CP20"/>
<dbReference type="PaxDb" id="284590-Q6CP20"/>
<dbReference type="KEGG" id="kla:KLLA0_E08163g"/>
<dbReference type="eggNOG" id="KOG0794">
    <property type="taxonomic scope" value="Eukaryota"/>
</dbReference>
<dbReference type="HOGENOM" id="CLU_034754_2_1_1"/>
<dbReference type="InParanoid" id="Q6CP20"/>
<dbReference type="OMA" id="CLLHPPH"/>
<dbReference type="Proteomes" id="UP000000598">
    <property type="component" value="Chromosome E"/>
</dbReference>
<dbReference type="GO" id="GO:0005634">
    <property type="term" value="C:nucleus"/>
    <property type="evidence" value="ECO:0007669"/>
    <property type="project" value="UniProtKB-SubCell"/>
</dbReference>
<dbReference type="GO" id="GO:0016538">
    <property type="term" value="F:cyclin-dependent protein serine/threonine kinase regulator activity"/>
    <property type="evidence" value="ECO:0007669"/>
    <property type="project" value="InterPro"/>
</dbReference>
<dbReference type="GO" id="GO:0006357">
    <property type="term" value="P:regulation of transcription by RNA polymerase II"/>
    <property type="evidence" value="ECO:0007669"/>
    <property type="project" value="InterPro"/>
</dbReference>
<dbReference type="CDD" id="cd20513">
    <property type="entry name" value="CYCLIN_CCNC_rpt1"/>
    <property type="match status" value="1"/>
</dbReference>
<dbReference type="CDD" id="cd20546">
    <property type="entry name" value="CYCLIN_SpCG1C_ScCTK2-like_rpt2"/>
    <property type="match status" value="1"/>
</dbReference>
<dbReference type="FunFam" id="1.10.472.10:FF:000077">
    <property type="entry name" value="RNA polymerase II holoenzyme cyclin-like subunit"/>
    <property type="match status" value="1"/>
</dbReference>
<dbReference type="Gene3D" id="1.10.472.10">
    <property type="entry name" value="Cyclin-like"/>
    <property type="match status" value="2"/>
</dbReference>
<dbReference type="InterPro" id="IPR013763">
    <property type="entry name" value="Cyclin-like_dom"/>
</dbReference>
<dbReference type="InterPro" id="IPR036915">
    <property type="entry name" value="Cyclin-like_sf"/>
</dbReference>
<dbReference type="InterPro" id="IPR043198">
    <property type="entry name" value="Cyclin/Ssn8"/>
</dbReference>
<dbReference type="InterPro" id="IPR006671">
    <property type="entry name" value="Cyclin_N"/>
</dbReference>
<dbReference type="PANTHER" id="PTHR10026">
    <property type="entry name" value="CYCLIN"/>
    <property type="match status" value="1"/>
</dbReference>
<dbReference type="Pfam" id="PF00134">
    <property type="entry name" value="Cyclin_N"/>
    <property type="match status" value="1"/>
</dbReference>
<dbReference type="PIRSF" id="PIRSF028758">
    <property type="entry name" value="Cyclin, C/H/G types"/>
    <property type="match status" value="1"/>
</dbReference>
<dbReference type="SMART" id="SM00385">
    <property type="entry name" value="CYCLIN"/>
    <property type="match status" value="2"/>
</dbReference>
<dbReference type="SUPFAM" id="SSF47954">
    <property type="entry name" value="Cyclin-like"/>
    <property type="match status" value="2"/>
</dbReference>
<comment type="function">
    <text evidence="1">Component of the SRB8-11 complex. The SRB8-11 complex is a regulatory module of the Mediator complex which is itself involved in regulation of basal and activated RNA polymerase II-dependent transcription. The SRB8-11 complex may be involved in the transcriptional repression of a subset of genes regulated by Mediator. It may inhibit the association of the Mediator complex with RNA polymerase II to form the holoenzyme complex. The SRB8-11 complex phosphorylates the C-terminal domain (CTD) of the largest subunit of RNA polymerase II (By similarity).</text>
</comment>
<comment type="subunit">
    <text evidence="1">Component of the SRB8-11 complex, a regulatory module of the Mediator complex.</text>
</comment>
<comment type="subcellular location">
    <subcellularLocation>
        <location evidence="2">Nucleus</location>
    </subcellularLocation>
</comment>
<comment type="similarity">
    <text evidence="2">Belongs to the cyclin family. Cyclin C subfamily.</text>
</comment>
<name>SSN8_KLULA</name>